<feature type="chain" id="PRO_0000287968" description="Energy-coupling factor transporter ATP-binding protein EcfA2">
    <location>
        <begin position="1"/>
        <end position="300"/>
    </location>
</feature>
<feature type="domain" description="ABC transporter" evidence="1">
    <location>
        <begin position="3"/>
        <end position="258"/>
    </location>
</feature>
<feature type="binding site" evidence="1">
    <location>
        <begin position="40"/>
        <end position="47"/>
    </location>
    <ligand>
        <name>ATP</name>
        <dbReference type="ChEBI" id="CHEBI:30616"/>
    </ligand>
</feature>
<gene>
    <name evidence="1" type="primary">ecfA2</name>
    <name type="synonym">cbiO2</name>
    <name type="ordered locus">mhp115</name>
</gene>
<dbReference type="EC" id="7.-.-.-" evidence="1"/>
<dbReference type="EMBL" id="AE017332">
    <property type="protein sequence ID" value="AAV27719.1"/>
    <property type="molecule type" value="Genomic_DNA"/>
</dbReference>
<dbReference type="RefSeq" id="WP_011205953.1">
    <property type="nucleotide sequence ID" value="NC_006360.1"/>
</dbReference>
<dbReference type="SMR" id="Q601T6"/>
<dbReference type="GeneID" id="41334562"/>
<dbReference type="KEGG" id="mhy:mhp115"/>
<dbReference type="eggNOG" id="COG1122">
    <property type="taxonomic scope" value="Bacteria"/>
</dbReference>
<dbReference type="HOGENOM" id="CLU_000604_1_22_14"/>
<dbReference type="PhylomeDB" id="Q601T6"/>
<dbReference type="Proteomes" id="UP000006822">
    <property type="component" value="Chromosome"/>
</dbReference>
<dbReference type="GO" id="GO:0043190">
    <property type="term" value="C:ATP-binding cassette (ABC) transporter complex"/>
    <property type="evidence" value="ECO:0007669"/>
    <property type="project" value="TreeGrafter"/>
</dbReference>
<dbReference type="GO" id="GO:0005524">
    <property type="term" value="F:ATP binding"/>
    <property type="evidence" value="ECO:0007669"/>
    <property type="project" value="UniProtKB-KW"/>
</dbReference>
<dbReference type="GO" id="GO:0016887">
    <property type="term" value="F:ATP hydrolysis activity"/>
    <property type="evidence" value="ECO:0007669"/>
    <property type="project" value="InterPro"/>
</dbReference>
<dbReference type="GO" id="GO:0042626">
    <property type="term" value="F:ATPase-coupled transmembrane transporter activity"/>
    <property type="evidence" value="ECO:0007669"/>
    <property type="project" value="TreeGrafter"/>
</dbReference>
<dbReference type="CDD" id="cd03225">
    <property type="entry name" value="ABC_cobalt_CbiO_domain1"/>
    <property type="match status" value="1"/>
</dbReference>
<dbReference type="FunFam" id="3.40.50.300:FF:000224">
    <property type="entry name" value="Energy-coupling factor transporter ATP-binding protein EcfA"/>
    <property type="match status" value="1"/>
</dbReference>
<dbReference type="Gene3D" id="3.40.50.300">
    <property type="entry name" value="P-loop containing nucleotide triphosphate hydrolases"/>
    <property type="match status" value="1"/>
</dbReference>
<dbReference type="InterPro" id="IPR003593">
    <property type="entry name" value="AAA+_ATPase"/>
</dbReference>
<dbReference type="InterPro" id="IPR003439">
    <property type="entry name" value="ABC_transporter-like_ATP-bd"/>
</dbReference>
<dbReference type="InterPro" id="IPR017871">
    <property type="entry name" value="ABC_transporter-like_CS"/>
</dbReference>
<dbReference type="InterPro" id="IPR015856">
    <property type="entry name" value="ABC_transpr_CbiO/EcfA_su"/>
</dbReference>
<dbReference type="InterPro" id="IPR050095">
    <property type="entry name" value="ECF_ABC_transporter_ATP-bd"/>
</dbReference>
<dbReference type="InterPro" id="IPR027417">
    <property type="entry name" value="P-loop_NTPase"/>
</dbReference>
<dbReference type="NCBIfam" id="NF010170">
    <property type="entry name" value="PRK13651.1"/>
    <property type="match status" value="1"/>
</dbReference>
<dbReference type="PANTHER" id="PTHR43553:SF27">
    <property type="entry name" value="ENERGY-COUPLING FACTOR TRANSPORTER ATP-BINDING PROTEIN ECFA2"/>
    <property type="match status" value="1"/>
</dbReference>
<dbReference type="PANTHER" id="PTHR43553">
    <property type="entry name" value="HEAVY METAL TRANSPORTER"/>
    <property type="match status" value="1"/>
</dbReference>
<dbReference type="Pfam" id="PF00005">
    <property type="entry name" value="ABC_tran"/>
    <property type="match status" value="1"/>
</dbReference>
<dbReference type="SMART" id="SM00382">
    <property type="entry name" value="AAA"/>
    <property type="match status" value="1"/>
</dbReference>
<dbReference type="SUPFAM" id="SSF52540">
    <property type="entry name" value="P-loop containing nucleoside triphosphate hydrolases"/>
    <property type="match status" value="1"/>
</dbReference>
<dbReference type="PROSITE" id="PS00211">
    <property type="entry name" value="ABC_TRANSPORTER_1"/>
    <property type="match status" value="1"/>
</dbReference>
<dbReference type="PROSITE" id="PS50893">
    <property type="entry name" value="ABC_TRANSPORTER_2"/>
    <property type="match status" value="1"/>
</dbReference>
<dbReference type="PROSITE" id="PS51246">
    <property type="entry name" value="CBIO"/>
    <property type="match status" value="1"/>
</dbReference>
<accession>Q601T6</accession>
<reference key="1">
    <citation type="journal article" date="2004" name="J. Bacteriol.">
        <title>The genome sequence of Mycoplasma hyopneumoniae strain 232, the agent of swine mycoplasmosis.</title>
        <authorList>
            <person name="Minion F.C."/>
            <person name="Lefkowitz E.J."/>
            <person name="Madsen M.L."/>
            <person name="Cleary B.J."/>
            <person name="Swartzell S.M."/>
            <person name="Mahairas G.G."/>
        </authorList>
    </citation>
    <scope>NUCLEOTIDE SEQUENCE [LARGE SCALE GENOMIC DNA]</scope>
    <source>
        <strain>232</strain>
    </source>
</reference>
<evidence type="ECO:0000255" key="1">
    <source>
        <dbReference type="HAMAP-Rule" id="MF_01710"/>
    </source>
</evidence>
<sequence length="300" mass="34233">MKIKAKNIVKIYDQKLPSELKALDKVTTEINQGEFIAIIGQTGSGKTTFIQHMNALLLPDQGEIEYLYFDSKNQEKKLVVQKPRFFRKKLKFINEIRRRVGVVFQFAEYQLFEQTIEKDIIFGAVSMGTPKNEAKKIAAEIIELVGLDQSFLQKSPFELSGGQKRRVAIAGILAMDPDIIFFDEPTAGLDPQGTLKMLEILDTLYKKGKTIILATHDLDSVLEWTKRCIFFKDGRIIYDGDTYSILANNKFLIENKMLPTNLLNFREKLIKIGYPISNVRSVSELISEINMLIQKETNAD</sequence>
<protein>
    <recommendedName>
        <fullName evidence="1">Energy-coupling factor transporter ATP-binding protein EcfA2</fullName>
        <shortName evidence="1">ECF transporter A component EcfA2</shortName>
        <ecNumber evidence="1">7.-.-.-</ecNumber>
    </recommendedName>
</protein>
<name>ECFA2_MESH2</name>
<proteinExistence type="inferred from homology"/>
<organism>
    <name type="scientific">Mesomycoplasma hyopneumoniae (strain 232)</name>
    <name type="common">Mycoplasma hyopneumoniae</name>
    <dbReference type="NCBI Taxonomy" id="295358"/>
    <lineage>
        <taxon>Bacteria</taxon>
        <taxon>Bacillati</taxon>
        <taxon>Mycoplasmatota</taxon>
        <taxon>Mycoplasmoidales</taxon>
        <taxon>Metamycoplasmataceae</taxon>
        <taxon>Mesomycoplasma</taxon>
    </lineage>
</organism>
<comment type="function">
    <text evidence="1">ATP-binding (A) component of a common energy-coupling factor (ECF) ABC-transporter complex. Unlike classic ABC transporters this ECF transporter provides the energy necessary to transport a number of different substrates.</text>
</comment>
<comment type="subunit">
    <text evidence="1">Forms a stable energy-coupling factor (ECF) transporter complex composed of 2 membrane-embedded substrate-binding proteins (S component), 2 ATP-binding proteins (A component) and 2 transmembrane proteins (T component).</text>
</comment>
<comment type="subcellular location">
    <subcellularLocation>
        <location evidence="1">Cell membrane</location>
        <topology evidence="1">Peripheral membrane protein</topology>
    </subcellularLocation>
</comment>
<comment type="similarity">
    <text evidence="1">Belongs to the ABC transporter superfamily. Energy-coupling factor EcfA family.</text>
</comment>
<keyword id="KW-0067">ATP-binding</keyword>
<keyword id="KW-1003">Cell membrane</keyword>
<keyword id="KW-0472">Membrane</keyword>
<keyword id="KW-0547">Nucleotide-binding</keyword>
<keyword id="KW-1278">Translocase</keyword>
<keyword id="KW-0813">Transport</keyword>